<evidence type="ECO:0000255" key="1"/>
<evidence type="ECO:0000255" key="2">
    <source>
        <dbReference type="PROSITE-ProRule" id="PRU00297"/>
    </source>
</evidence>
<evidence type="ECO:0000255" key="3">
    <source>
        <dbReference type="PROSITE-ProRule" id="PRU10012"/>
    </source>
</evidence>
<proteinExistence type="evidence at transcript level"/>
<sequence>MSFLRFVGAILFLVAIFGASNAQLSATFYDTTCPNVTSIVRGVMDQRQRTDARAGAKIIRLHFHDCFVNGCDGSILLDTDGTQTEKDAPANVGAGGFDIVDDIKTALENVCPGVVSCADILALASEIGVVLAKGPSWQVLFGRKDSLTANRSGANSDIPSPFETLAVMIPQFTNKGMDLTDLVALSGAHTFGRARCGTFEQRLFNFNGSGNPDLTVDATFLQTLQGICPQGGNNGNTFTNLDISTPNDFDNDYFTNLQSNQGLLQTDQELFSTSGSATIAIVNRYAGSQTQFFDDFVSSMIKLGNISPLTGTNGQIRTDCKRVN</sequence>
<keyword id="KW-0106">Calcium</keyword>
<keyword id="KW-1015">Disulfide bond</keyword>
<keyword id="KW-0325">Glycoprotein</keyword>
<keyword id="KW-0349">Heme</keyword>
<keyword id="KW-0376">Hydrogen peroxide</keyword>
<keyword id="KW-0408">Iron</keyword>
<keyword id="KW-0479">Metal-binding</keyword>
<keyword id="KW-0560">Oxidoreductase</keyword>
<keyword id="KW-0575">Peroxidase</keyword>
<keyword id="KW-0873">Pyrrolidone carboxylic acid</keyword>
<keyword id="KW-1185">Reference proteome</keyword>
<keyword id="KW-0964">Secreted</keyword>
<keyword id="KW-0732">Signal</keyword>
<reference key="1">
    <citation type="journal article" date="1987" name="Proc. Natl. Acad. Sci. U.S.A.">
        <title>Molecular cloning of complementary DNA encoding the lignin-forming peroxidase from tobacco: molecular analysis and tissue-specific expression.</title>
        <authorList>
            <person name="Lagrimini L.M."/>
            <person name="Burkhart W."/>
            <person name="Moyer M."/>
            <person name="Rothstein S."/>
        </authorList>
    </citation>
    <scope>NUCLEOTIDE SEQUENCE [MRNA]</scope>
</reference>
<name>PERX_TOBAC</name>
<dbReference type="EC" id="1.11.1.7"/>
<dbReference type="EMBL" id="J02979">
    <property type="protein sequence ID" value="AAA34108.1"/>
    <property type="molecule type" value="mRNA"/>
</dbReference>
<dbReference type="PIR" id="A39889">
    <property type="entry name" value="A39889"/>
</dbReference>
<dbReference type="RefSeq" id="NP_001412900.1">
    <property type="nucleotide sequence ID" value="NM_001425971.1"/>
</dbReference>
<dbReference type="RefSeq" id="XP_016513542.1">
    <property type="nucleotide sequence ID" value="XM_016658056.1"/>
</dbReference>
<dbReference type="SMR" id="P11965"/>
<dbReference type="STRING" id="4097.P11965"/>
<dbReference type="PeroxiBase" id="1">
    <property type="entry name" value="NtPrx09-2A"/>
</dbReference>
<dbReference type="PaxDb" id="4097-P11965"/>
<dbReference type="GeneID" id="107830487"/>
<dbReference type="KEGG" id="nta:107830487"/>
<dbReference type="OMA" id="FYASTCA"/>
<dbReference type="OrthoDB" id="2113341at2759"/>
<dbReference type="PhylomeDB" id="P11965"/>
<dbReference type="Proteomes" id="UP000084051">
    <property type="component" value="Unplaced"/>
</dbReference>
<dbReference type="GO" id="GO:0005576">
    <property type="term" value="C:extracellular region"/>
    <property type="evidence" value="ECO:0007669"/>
    <property type="project" value="UniProtKB-SubCell"/>
</dbReference>
<dbReference type="GO" id="GO:0020037">
    <property type="term" value="F:heme binding"/>
    <property type="evidence" value="ECO:0007669"/>
    <property type="project" value="InterPro"/>
</dbReference>
<dbReference type="GO" id="GO:0140825">
    <property type="term" value="F:lactoperoxidase activity"/>
    <property type="evidence" value="ECO:0007669"/>
    <property type="project" value="UniProtKB-EC"/>
</dbReference>
<dbReference type="GO" id="GO:0046872">
    <property type="term" value="F:metal ion binding"/>
    <property type="evidence" value="ECO:0007669"/>
    <property type="project" value="UniProtKB-KW"/>
</dbReference>
<dbReference type="GO" id="GO:0042744">
    <property type="term" value="P:hydrogen peroxide catabolic process"/>
    <property type="evidence" value="ECO:0007669"/>
    <property type="project" value="UniProtKB-KW"/>
</dbReference>
<dbReference type="GO" id="GO:0006979">
    <property type="term" value="P:response to oxidative stress"/>
    <property type="evidence" value="ECO:0007669"/>
    <property type="project" value="InterPro"/>
</dbReference>
<dbReference type="CDD" id="cd00693">
    <property type="entry name" value="secretory_peroxidase"/>
    <property type="match status" value="1"/>
</dbReference>
<dbReference type="FunFam" id="1.10.420.10:FF:000001">
    <property type="entry name" value="Peroxidase"/>
    <property type="match status" value="1"/>
</dbReference>
<dbReference type="Gene3D" id="1.10.520.10">
    <property type="match status" value="1"/>
</dbReference>
<dbReference type="Gene3D" id="1.10.420.10">
    <property type="entry name" value="Peroxidase, domain 2"/>
    <property type="match status" value="1"/>
</dbReference>
<dbReference type="InterPro" id="IPR002016">
    <property type="entry name" value="Haem_peroxidase"/>
</dbReference>
<dbReference type="InterPro" id="IPR010255">
    <property type="entry name" value="Haem_peroxidase_sf"/>
</dbReference>
<dbReference type="InterPro" id="IPR000823">
    <property type="entry name" value="Peroxidase_pln"/>
</dbReference>
<dbReference type="InterPro" id="IPR019794">
    <property type="entry name" value="Peroxidases_AS"/>
</dbReference>
<dbReference type="InterPro" id="IPR019793">
    <property type="entry name" value="Peroxidases_heam-ligand_BS"/>
</dbReference>
<dbReference type="InterPro" id="IPR033905">
    <property type="entry name" value="Secretory_peroxidase"/>
</dbReference>
<dbReference type="PANTHER" id="PTHR31388:SF147">
    <property type="entry name" value="PEROXIDASE 58"/>
    <property type="match status" value="1"/>
</dbReference>
<dbReference type="PANTHER" id="PTHR31388">
    <property type="entry name" value="PEROXIDASE 72-RELATED"/>
    <property type="match status" value="1"/>
</dbReference>
<dbReference type="Pfam" id="PF00141">
    <property type="entry name" value="peroxidase"/>
    <property type="match status" value="1"/>
</dbReference>
<dbReference type="PRINTS" id="PR00458">
    <property type="entry name" value="PEROXIDASE"/>
</dbReference>
<dbReference type="PRINTS" id="PR00461">
    <property type="entry name" value="PLPEROXIDASE"/>
</dbReference>
<dbReference type="SUPFAM" id="SSF48113">
    <property type="entry name" value="Heme-dependent peroxidases"/>
    <property type="match status" value="1"/>
</dbReference>
<dbReference type="PROSITE" id="PS00435">
    <property type="entry name" value="PEROXIDASE_1"/>
    <property type="match status" value="1"/>
</dbReference>
<dbReference type="PROSITE" id="PS00436">
    <property type="entry name" value="PEROXIDASE_2"/>
    <property type="match status" value="1"/>
</dbReference>
<dbReference type="PROSITE" id="PS50873">
    <property type="entry name" value="PEROXIDASE_4"/>
    <property type="match status" value="1"/>
</dbReference>
<protein>
    <recommendedName>
        <fullName>Lignin-forming anionic peroxidase</fullName>
        <ecNumber>1.11.1.7</ecNumber>
    </recommendedName>
    <alternativeName>
        <fullName>TOPA</fullName>
    </alternativeName>
</protein>
<accession>P11965</accession>
<feature type="signal peptide">
    <location>
        <begin position="1"/>
        <end position="22"/>
    </location>
</feature>
<feature type="chain" id="PRO_0000023756" description="Lignin-forming anionic peroxidase">
    <location>
        <begin position="23"/>
        <end position="324"/>
    </location>
</feature>
<feature type="active site" description="Proton acceptor" evidence="2 3">
    <location>
        <position position="64"/>
    </location>
</feature>
<feature type="binding site" evidence="2">
    <location>
        <position position="65"/>
    </location>
    <ligand>
        <name>Ca(2+)</name>
        <dbReference type="ChEBI" id="CHEBI:29108"/>
        <label>1</label>
    </ligand>
</feature>
<feature type="binding site" evidence="2">
    <location>
        <position position="68"/>
    </location>
    <ligand>
        <name>Ca(2+)</name>
        <dbReference type="ChEBI" id="CHEBI:29108"/>
        <label>1</label>
    </ligand>
</feature>
<feature type="binding site" evidence="2">
    <location>
        <position position="70"/>
    </location>
    <ligand>
        <name>Ca(2+)</name>
        <dbReference type="ChEBI" id="CHEBI:29108"/>
        <label>1</label>
    </ligand>
</feature>
<feature type="binding site" evidence="2">
    <location>
        <position position="72"/>
    </location>
    <ligand>
        <name>Ca(2+)</name>
        <dbReference type="ChEBI" id="CHEBI:29108"/>
        <label>1</label>
    </ligand>
</feature>
<feature type="binding site" evidence="2">
    <location>
        <position position="74"/>
    </location>
    <ligand>
        <name>Ca(2+)</name>
        <dbReference type="ChEBI" id="CHEBI:29108"/>
        <label>1</label>
    </ligand>
</feature>
<feature type="binding site" evidence="2">
    <location>
        <position position="159"/>
    </location>
    <ligand>
        <name>substrate</name>
    </ligand>
</feature>
<feature type="binding site" description="axial binding residue" evidence="2">
    <location>
        <position position="189"/>
    </location>
    <ligand>
        <name>heme b</name>
        <dbReference type="ChEBI" id="CHEBI:60344"/>
    </ligand>
    <ligandPart>
        <name>Fe</name>
        <dbReference type="ChEBI" id="CHEBI:18248"/>
    </ligandPart>
</feature>
<feature type="binding site" evidence="2">
    <location>
        <position position="190"/>
    </location>
    <ligand>
        <name>Ca(2+)</name>
        <dbReference type="ChEBI" id="CHEBI:29108"/>
        <label>2</label>
    </ligand>
</feature>
<feature type="binding site" evidence="2">
    <location>
        <position position="242"/>
    </location>
    <ligand>
        <name>Ca(2+)</name>
        <dbReference type="ChEBI" id="CHEBI:29108"/>
        <label>2</label>
    </ligand>
</feature>
<feature type="binding site" evidence="2">
    <location>
        <position position="245"/>
    </location>
    <ligand>
        <name>Ca(2+)</name>
        <dbReference type="ChEBI" id="CHEBI:29108"/>
        <label>2</label>
    </ligand>
</feature>
<feature type="binding site" evidence="2">
    <location>
        <position position="250"/>
    </location>
    <ligand>
        <name>Ca(2+)</name>
        <dbReference type="ChEBI" id="CHEBI:29108"/>
        <label>2</label>
    </ligand>
</feature>
<feature type="site" description="Transition state stabilizer" evidence="2">
    <location>
        <position position="60"/>
    </location>
</feature>
<feature type="modified residue" description="Pyrrolidone carboxylic acid" evidence="2">
    <location>
        <position position="23"/>
    </location>
</feature>
<feature type="glycosylation site" description="N-linked (GlcNAc...) asparagine" evidence="1">
    <location>
        <position position="35"/>
    </location>
</feature>
<feature type="glycosylation site" description="N-linked (GlcNAc...) asparagine" evidence="1">
    <location>
        <position position="150"/>
    </location>
</feature>
<feature type="glycosylation site" description="N-linked (GlcNAc...) asparagine" evidence="1">
    <location>
        <position position="207"/>
    </location>
</feature>
<feature type="disulfide bond" evidence="2">
    <location>
        <begin position="33"/>
        <end position="111"/>
    </location>
</feature>
<feature type="disulfide bond" evidence="2">
    <location>
        <begin position="66"/>
        <end position="71"/>
    </location>
</feature>
<feature type="disulfide bond" evidence="2">
    <location>
        <begin position="117"/>
        <end position="320"/>
    </location>
</feature>
<feature type="disulfide bond" evidence="2">
    <location>
        <begin position="196"/>
        <end position="228"/>
    </location>
</feature>
<comment type="function">
    <text>Removal of H(2)O(2), oxidation of toxic reductants, biosynthesis and degradation of lignin, suberization, auxin catabolism, response to environmental stresses such as wounding, pathogen attack and oxidative stress. These functions might be dependent on each isozyme/isoform in each plant tissue.</text>
</comment>
<comment type="function">
    <text>Plays an integral role in secondary cell wall biosynthesis by the polymerization of cinnamyl alcohols into lignin and by forming rigid cross-links between cellulose, pectin, hydroxy-proline-rich glycoproteins, and lignin.</text>
</comment>
<comment type="catalytic activity">
    <reaction>
        <text>2 a phenolic donor + H2O2 = 2 a phenolic radical donor + 2 H2O</text>
        <dbReference type="Rhea" id="RHEA:56136"/>
        <dbReference type="ChEBI" id="CHEBI:15377"/>
        <dbReference type="ChEBI" id="CHEBI:16240"/>
        <dbReference type="ChEBI" id="CHEBI:139520"/>
        <dbReference type="ChEBI" id="CHEBI:139521"/>
        <dbReference type="EC" id="1.11.1.7"/>
    </reaction>
</comment>
<comment type="cofactor">
    <cofactor>
        <name>Ca(2+)</name>
        <dbReference type="ChEBI" id="CHEBI:29108"/>
    </cofactor>
    <text>Binds 2 calcium ions per subunit.</text>
</comment>
<comment type="cofactor">
    <cofactor>
        <name>heme b</name>
        <dbReference type="ChEBI" id="CHEBI:60344"/>
    </cofactor>
    <text>Binds 1 heme b (iron(II)-protoporphyrin IX) group per subunit.</text>
</comment>
<comment type="subcellular location">
    <subcellularLocation>
        <location evidence="2">Secreted</location>
    </subcellularLocation>
</comment>
<comment type="similarity">
    <text evidence="2">Belongs to the peroxidase family. Classical plant (class III) peroxidase subfamily.</text>
</comment>
<organism>
    <name type="scientific">Nicotiana tabacum</name>
    <name type="common">Common tobacco</name>
    <dbReference type="NCBI Taxonomy" id="4097"/>
    <lineage>
        <taxon>Eukaryota</taxon>
        <taxon>Viridiplantae</taxon>
        <taxon>Streptophyta</taxon>
        <taxon>Embryophyta</taxon>
        <taxon>Tracheophyta</taxon>
        <taxon>Spermatophyta</taxon>
        <taxon>Magnoliopsida</taxon>
        <taxon>eudicotyledons</taxon>
        <taxon>Gunneridae</taxon>
        <taxon>Pentapetalae</taxon>
        <taxon>asterids</taxon>
        <taxon>lamiids</taxon>
        <taxon>Solanales</taxon>
        <taxon>Solanaceae</taxon>
        <taxon>Nicotianoideae</taxon>
        <taxon>Nicotianeae</taxon>
        <taxon>Nicotiana</taxon>
    </lineage>
</organism>